<gene>
    <name type="ordered locus">MRA_3323</name>
</gene>
<protein>
    <recommendedName>
        <fullName evidence="1">Nucleoside triphosphate pyrophosphatase</fullName>
        <ecNumber evidence="1">3.6.1.9</ecNumber>
    </recommendedName>
    <alternativeName>
        <fullName evidence="1">Nucleotide pyrophosphatase</fullName>
        <shortName evidence="1">Nucleotide PPase</shortName>
    </alternativeName>
</protein>
<evidence type="ECO:0000255" key="1">
    <source>
        <dbReference type="HAMAP-Rule" id="MF_00528"/>
    </source>
</evidence>
<dbReference type="EC" id="3.6.1.9" evidence="1"/>
<dbReference type="EMBL" id="CP000611">
    <property type="protein sequence ID" value="ABQ75106.1"/>
    <property type="molecule type" value="Genomic_DNA"/>
</dbReference>
<dbReference type="RefSeq" id="WP_003417146.1">
    <property type="nucleotide sequence ID" value="NZ_CP016972.1"/>
</dbReference>
<dbReference type="SMR" id="A5U7V6"/>
<dbReference type="KEGG" id="mra:MRA_3323"/>
<dbReference type="eggNOG" id="COG0424">
    <property type="taxonomic scope" value="Bacteria"/>
</dbReference>
<dbReference type="HOGENOM" id="CLU_040416_1_2_11"/>
<dbReference type="Proteomes" id="UP000001988">
    <property type="component" value="Chromosome"/>
</dbReference>
<dbReference type="GO" id="GO:0005737">
    <property type="term" value="C:cytoplasm"/>
    <property type="evidence" value="ECO:0007669"/>
    <property type="project" value="UniProtKB-SubCell"/>
</dbReference>
<dbReference type="GO" id="GO:0047429">
    <property type="term" value="F:nucleoside triphosphate diphosphatase activity"/>
    <property type="evidence" value="ECO:0007669"/>
    <property type="project" value="UniProtKB-EC"/>
</dbReference>
<dbReference type="GO" id="GO:0009117">
    <property type="term" value="P:nucleotide metabolic process"/>
    <property type="evidence" value="ECO:0007669"/>
    <property type="project" value="UniProtKB-KW"/>
</dbReference>
<dbReference type="CDD" id="cd00555">
    <property type="entry name" value="Maf"/>
    <property type="match status" value="1"/>
</dbReference>
<dbReference type="FunFam" id="3.90.950.10:FF:000010">
    <property type="entry name" value="Nucleoside triphosphate pyrophosphatase"/>
    <property type="match status" value="1"/>
</dbReference>
<dbReference type="Gene3D" id="3.90.950.10">
    <property type="match status" value="1"/>
</dbReference>
<dbReference type="HAMAP" id="MF_00528">
    <property type="entry name" value="Maf"/>
    <property type="match status" value="1"/>
</dbReference>
<dbReference type="InterPro" id="IPR029001">
    <property type="entry name" value="ITPase-like_fam"/>
</dbReference>
<dbReference type="InterPro" id="IPR003697">
    <property type="entry name" value="Maf-like"/>
</dbReference>
<dbReference type="NCBIfam" id="TIGR00172">
    <property type="entry name" value="maf"/>
    <property type="match status" value="1"/>
</dbReference>
<dbReference type="PANTHER" id="PTHR43213">
    <property type="entry name" value="BIFUNCTIONAL DTTP/UTP PYROPHOSPHATASE/METHYLTRANSFERASE PROTEIN-RELATED"/>
    <property type="match status" value="1"/>
</dbReference>
<dbReference type="PANTHER" id="PTHR43213:SF5">
    <property type="entry name" value="BIFUNCTIONAL DTTP_UTP PYROPHOSPHATASE_METHYLTRANSFERASE PROTEIN-RELATED"/>
    <property type="match status" value="1"/>
</dbReference>
<dbReference type="Pfam" id="PF02545">
    <property type="entry name" value="Maf"/>
    <property type="match status" value="1"/>
</dbReference>
<dbReference type="PIRSF" id="PIRSF006305">
    <property type="entry name" value="Maf"/>
    <property type="match status" value="1"/>
</dbReference>
<dbReference type="SUPFAM" id="SSF52972">
    <property type="entry name" value="ITPase-like"/>
    <property type="match status" value="1"/>
</dbReference>
<keyword id="KW-0963">Cytoplasm</keyword>
<keyword id="KW-0378">Hydrolase</keyword>
<keyword id="KW-0546">Nucleotide metabolism</keyword>
<keyword id="KW-1185">Reference proteome</keyword>
<feature type="chain" id="PRO_1000060949" description="Nucleoside triphosphate pyrophosphatase">
    <location>
        <begin position="1"/>
        <end position="222"/>
    </location>
</feature>
<feature type="active site" description="Proton acceptor" evidence="1">
    <location>
        <position position="82"/>
    </location>
</feature>
<proteinExistence type="inferred from homology"/>
<accession>A5U7V6</accession>
<comment type="function">
    <text evidence="1">Nucleoside triphosphate pyrophosphatase. May have a dual role in cell division arrest and in preventing the incorporation of modified nucleotides into cellular nucleic acids.</text>
</comment>
<comment type="catalytic activity">
    <reaction evidence="1">
        <text>a ribonucleoside 5'-triphosphate + H2O = a ribonucleoside 5'-phosphate + diphosphate + H(+)</text>
        <dbReference type="Rhea" id="RHEA:23996"/>
        <dbReference type="ChEBI" id="CHEBI:15377"/>
        <dbReference type="ChEBI" id="CHEBI:15378"/>
        <dbReference type="ChEBI" id="CHEBI:33019"/>
        <dbReference type="ChEBI" id="CHEBI:58043"/>
        <dbReference type="ChEBI" id="CHEBI:61557"/>
        <dbReference type="EC" id="3.6.1.9"/>
    </reaction>
</comment>
<comment type="catalytic activity">
    <reaction evidence="1">
        <text>a 2'-deoxyribonucleoside 5'-triphosphate + H2O = a 2'-deoxyribonucleoside 5'-phosphate + diphosphate + H(+)</text>
        <dbReference type="Rhea" id="RHEA:44644"/>
        <dbReference type="ChEBI" id="CHEBI:15377"/>
        <dbReference type="ChEBI" id="CHEBI:15378"/>
        <dbReference type="ChEBI" id="CHEBI:33019"/>
        <dbReference type="ChEBI" id="CHEBI:61560"/>
        <dbReference type="ChEBI" id="CHEBI:65317"/>
        <dbReference type="EC" id="3.6.1.9"/>
    </reaction>
</comment>
<comment type="cofactor">
    <cofactor evidence="1">
        <name>a divalent metal cation</name>
        <dbReference type="ChEBI" id="CHEBI:60240"/>
    </cofactor>
</comment>
<comment type="subcellular location">
    <subcellularLocation>
        <location evidence="1">Cytoplasm</location>
    </subcellularLocation>
</comment>
<comment type="similarity">
    <text evidence="1">Belongs to the Maf family.</text>
</comment>
<reference key="1">
    <citation type="journal article" date="2008" name="PLoS ONE">
        <title>Genetic basis of virulence attenuation revealed by comparative genomic analysis of Mycobacterium tuberculosis strain H37Ra versus H37Rv.</title>
        <authorList>
            <person name="Zheng H."/>
            <person name="Lu L."/>
            <person name="Wang B."/>
            <person name="Pu S."/>
            <person name="Zhang X."/>
            <person name="Zhu G."/>
            <person name="Shi W."/>
            <person name="Zhang L."/>
            <person name="Wang H."/>
            <person name="Wang S."/>
            <person name="Zhao G."/>
            <person name="Zhang Y."/>
        </authorList>
    </citation>
    <scope>NUCLEOTIDE SEQUENCE [LARGE SCALE GENOMIC DNA]</scope>
    <source>
        <strain>ATCC 25177 / H37Ra</strain>
    </source>
</reference>
<name>NTPP_MYCTA</name>
<organism>
    <name type="scientific">Mycobacterium tuberculosis (strain ATCC 25177 / H37Ra)</name>
    <dbReference type="NCBI Taxonomy" id="419947"/>
    <lineage>
        <taxon>Bacteria</taxon>
        <taxon>Bacillati</taxon>
        <taxon>Actinomycetota</taxon>
        <taxon>Actinomycetes</taxon>
        <taxon>Mycobacteriales</taxon>
        <taxon>Mycobacteriaceae</taxon>
        <taxon>Mycobacterium</taxon>
        <taxon>Mycobacterium tuberculosis complex</taxon>
    </lineage>
</organism>
<sequence>MTRLVLGSASPGRLKVLRDAGIEPLVIASHVDEDVVIAALGPDAVPSDVVCVLAAAKAAQVATTLTGTQRIVAADCVVVACDSMLYIEGRLLGKPASIDEAREQWRSMAGRAGQLYTGHGVIRLQDNKTVYRAAETAITTVYFGTPSASDLEAYLASGESLRVAGGFTLDGLGGWFIDGVQGNPSNVIGLSLPLLRSLVQRCGLSVAALWAGNAGGPAHKQQ</sequence>